<dbReference type="EMBL" id="AY570381">
    <property type="protein sequence ID" value="AAS77385.1"/>
    <property type="molecule type" value="mRNA"/>
</dbReference>
<dbReference type="SMR" id="Q6PZD3"/>
<dbReference type="GO" id="GO:0005576">
    <property type="term" value="C:extracellular region"/>
    <property type="evidence" value="ECO:0007669"/>
    <property type="project" value="UniProtKB-SubCell"/>
</dbReference>
<dbReference type="GO" id="GO:0042612">
    <property type="term" value="C:MHC class I protein complex"/>
    <property type="evidence" value="ECO:0007669"/>
    <property type="project" value="UniProtKB-KW"/>
</dbReference>
<dbReference type="GO" id="GO:0002474">
    <property type="term" value="P:antigen processing and presentation of peptide antigen via MHC class I"/>
    <property type="evidence" value="ECO:0007669"/>
    <property type="project" value="UniProtKB-KW"/>
</dbReference>
<dbReference type="GO" id="GO:0006955">
    <property type="term" value="P:immune response"/>
    <property type="evidence" value="ECO:0007669"/>
    <property type="project" value="InterPro"/>
</dbReference>
<dbReference type="CDD" id="cd05770">
    <property type="entry name" value="IgC1_beta2m"/>
    <property type="match status" value="1"/>
</dbReference>
<dbReference type="FunFam" id="2.60.40.10:FF:001005">
    <property type="entry name" value="Beta-2-microglobulin"/>
    <property type="match status" value="1"/>
</dbReference>
<dbReference type="Gene3D" id="2.60.40.10">
    <property type="entry name" value="Immunoglobulins"/>
    <property type="match status" value="1"/>
</dbReference>
<dbReference type="InterPro" id="IPR015707">
    <property type="entry name" value="B2Microglobulin"/>
</dbReference>
<dbReference type="InterPro" id="IPR007110">
    <property type="entry name" value="Ig-like_dom"/>
</dbReference>
<dbReference type="InterPro" id="IPR036179">
    <property type="entry name" value="Ig-like_dom_sf"/>
</dbReference>
<dbReference type="InterPro" id="IPR013783">
    <property type="entry name" value="Ig-like_fold"/>
</dbReference>
<dbReference type="InterPro" id="IPR003006">
    <property type="entry name" value="Ig/MHC_CS"/>
</dbReference>
<dbReference type="InterPro" id="IPR003597">
    <property type="entry name" value="Ig_C1-set"/>
</dbReference>
<dbReference type="InterPro" id="IPR050160">
    <property type="entry name" value="MHC/Immunoglobulin"/>
</dbReference>
<dbReference type="PANTHER" id="PTHR19944:SF62">
    <property type="entry name" value="BETA-2-MICROGLOBULIN"/>
    <property type="match status" value="1"/>
</dbReference>
<dbReference type="PANTHER" id="PTHR19944">
    <property type="entry name" value="MHC CLASS II-RELATED"/>
    <property type="match status" value="1"/>
</dbReference>
<dbReference type="Pfam" id="PF07654">
    <property type="entry name" value="C1-set"/>
    <property type="match status" value="1"/>
</dbReference>
<dbReference type="SMART" id="SM00407">
    <property type="entry name" value="IGc1"/>
    <property type="match status" value="1"/>
</dbReference>
<dbReference type="SUPFAM" id="SSF48726">
    <property type="entry name" value="Immunoglobulin"/>
    <property type="match status" value="1"/>
</dbReference>
<dbReference type="PROSITE" id="PS50835">
    <property type="entry name" value="IG_LIKE"/>
    <property type="match status" value="1"/>
</dbReference>
<dbReference type="PROSITE" id="PS00290">
    <property type="entry name" value="IG_MHC"/>
    <property type="match status" value="1"/>
</dbReference>
<comment type="function">
    <text>Component of the class I major histocompatibility complex (MHC). Involved in the presentation of peptide antigens to the immune system.</text>
</comment>
<comment type="subunit">
    <text>Heterodimer of an alpha chain and a beta chain. Beta-2-microglobulin is the beta-chain of major histocompatibility complex class I molecules.</text>
</comment>
<comment type="subcellular location">
    <subcellularLocation>
        <location>Secreted</location>
    </subcellularLocation>
</comment>
<comment type="similarity">
    <text evidence="3">Belongs to the beta-2-microglobulin family.</text>
</comment>
<gene>
    <name type="primary">B2M</name>
</gene>
<organism>
    <name type="scientific">Chlorocebus aethiops</name>
    <name type="common">Green monkey</name>
    <name type="synonym">Cercopithecus aethiops</name>
    <dbReference type="NCBI Taxonomy" id="9534"/>
    <lineage>
        <taxon>Eukaryota</taxon>
        <taxon>Metazoa</taxon>
        <taxon>Chordata</taxon>
        <taxon>Craniata</taxon>
        <taxon>Vertebrata</taxon>
        <taxon>Euteleostomi</taxon>
        <taxon>Mammalia</taxon>
        <taxon>Eutheria</taxon>
        <taxon>Euarchontoglires</taxon>
        <taxon>Primates</taxon>
        <taxon>Haplorrhini</taxon>
        <taxon>Catarrhini</taxon>
        <taxon>Cercopithecidae</taxon>
        <taxon>Cercopithecinae</taxon>
        <taxon>Chlorocebus</taxon>
    </lineage>
</organism>
<reference key="1">
    <citation type="journal article" date="2005" name="J. Immunol.">
        <title>A mutant cell with a novel defect in MHC class I quality control.</title>
        <authorList>
            <person name="York I.A."/>
            <person name="Grant E.P."/>
            <person name="Dahl A.M."/>
            <person name="Rock K.L."/>
        </authorList>
    </citation>
    <scope>NUCLEOTIDE SEQUENCE [MRNA]</scope>
    <scope>CHARACTERIZATION</scope>
</reference>
<proteinExistence type="evidence at protein level"/>
<evidence type="ECO:0000250" key="1"/>
<evidence type="ECO:0000255" key="2">
    <source>
        <dbReference type="PROSITE-ProRule" id="PRU00114"/>
    </source>
</evidence>
<evidence type="ECO:0000305" key="3"/>
<keyword id="KW-1015">Disulfide bond</keyword>
<keyword id="KW-0391">Immunity</keyword>
<keyword id="KW-0393">Immunoglobulin domain</keyword>
<keyword id="KW-0490">MHC I</keyword>
<keyword id="KW-0964">Secreted</keyword>
<keyword id="KW-0732">Signal</keyword>
<accession>Q6PZD3</accession>
<name>B2MG_CHLAE</name>
<protein>
    <recommendedName>
        <fullName>Beta-2-microglobulin</fullName>
    </recommendedName>
</protein>
<sequence>MFRSVALAVLALLFLSGLEAIQRAPKIQVYSRHPPENGKSNFLNCYVSGFHPSDIEVDLLKNGEKMGKVEHSDLSFSKDWSFYLLYYTEFTPNEKDEYACRVNHVTLSGPRTVKWDRDM</sequence>
<feature type="signal peptide" evidence="1">
    <location>
        <begin position="1"/>
        <end position="20"/>
    </location>
</feature>
<feature type="chain" id="PRO_0000041819" description="Beta-2-microglobulin">
    <location>
        <begin position="21"/>
        <end position="119"/>
    </location>
</feature>
<feature type="domain" description="Ig-like C1-type">
    <location>
        <begin position="25"/>
        <end position="114"/>
    </location>
</feature>
<feature type="disulfide bond" evidence="2">
    <location>
        <begin position="45"/>
        <end position="100"/>
    </location>
</feature>